<keyword id="KW-1015">Disulfide bond</keyword>
<keyword id="KW-0325">Glycoprotein</keyword>
<keyword id="KW-0348">Hemagglutinin</keyword>
<keyword id="KW-1032">Host cell membrane</keyword>
<keyword id="KW-1043">Host membrane</keyword>
<keyword id="KW-0378">Hydrolase</keyword>
<keyword id="KW-0472">Membrane</keyword>
<keyword id="KW-0732">Signal</keyword>
<keyword id="KW-0812">Transmembrane</keyword>
<keyword id="KW-1133">Transmembrane helix</keyword>
<keyword id="KW-0261">Viral envelope protein</keyword>
<keyword id="KW-0946">Virion</keyword>
<protein>
    <recommendedName>
        <fullName evidence="1">Hemagglutinin-esterase</fullName>
        <shortName evidence="1">HE protein</shortName>
        <ecNumber evidence="1">3.1.1.53</ecNumber>
    </recommendedName>
    <alternativeName>
        <fullName evidence="1">E3 glycoprotein</fullName>
    </alternativeName>
</protein>
<proteinExistence type="inferred from homology"/>
<gene>
    <name evidence="1" type="primary">HE</name>
</gene>
<dbReference type="EC" id="3.1.1.53" evidence="1"/>
<dbReference type="EMBL" id="AF481863">
    <property type="protein sequence ID" value="AAM76999.1"/>
    <property type="molecule type" value="Genomic_RNA"/>
</dbReference>
<dbReference type="SMR" id="Q8JSP9"/>
<dbReference type="GlyCosmos" id="Q8JSP9">
    <property type="glycosylation" value="7 sites, No reported glycans"/>
</dbReference>
<dbReference type="Proteomes" id="UP000007543">
    <property type="component" value="Genome"/>
</dbReference>
<dbReference type="GO" id="GO:0020002">
    <property type="term" value="C:host cell plasma membrane"/>
    <property type="evidence" value="ECO:0007669"/>
    <property type="project" value="UniProtKB-SubCell"/>
</dbReference>
<dbReference type="GO" id="GO:0016020">
    <property type="term" value="C:membrane"/>
    <property type="evidence" value="ECO:0007669"/>
    <property type="project" value="UniProtKB-UniRule"/>
</dbReference>
<dbReference type="GO" id="GO:0019031">
    <property type="term" value="C:viral envelope"/>
    <property type="evidence" value="ECO:0007669"/>
    <property type="project" value="UniProtKB-UniRule"/>
</dbReference>
<dbReference type="GO" id="GO:0055036">
    <property type="term" value="C:virion membrane"/>
    <property type="evidence" value="ECO:0007669"/>
    <property type="project" value="UniProtKB-SubCell"/>
</dbReference>
<dbReference type="GO" id="GO:0046789">
    <property type="term" value="F:host cell surface receptor binding"/>
    <property type="evidence" value="ECO:0007669"/>
    <property type="project" value="UniProtKB-UniRule"/>
</dbReference>
<dbReference type="GO" id="GO:0106331">
    <property type="term" value="F:sialate 4-O-acetylesterase activity"/>
    <property type="evidence" value="ECO:0007669"/>
    <property type="project" value="RHEA"/>
</dbReference>
<dbReference type="GO" id="GO:0106330">
    <property type="term" value="F:sialate 9-O-acetylesterase activity"/>
    <property type="evidence" value="ECO:0007669"/>
    <property type="project" value="RHEA"/>
</dbReference>
<dbReference type="GO" id="GO:0001681">
    <property type="term" value="F:sialate O-acetylesterase activity"/>
    <property type="evidence" value="ECO:0000250"/>
    <property type="project" value="UniProtKB"/>
</dbReference>
<dbReference type="GO" id="GO:0019064">
    <property type="term" value="P:fusion of virus membrane with host plasma membrane"/>
    <property type="evidence" value="ECO:0007669"/>
    <property type="project" value="UniProtKB-UniRule"/>
</dbReference>
<dbReference type="HAMAP" id="MF_04207">
    <property type="entry name" value="BETA_CORONA_HE"/>
    <property type="match status" value="1"/>
</dbReference>
<dbReference type="InterPro" id="IPR008980">
    <property type="entry name" value="Capsid_hemagglutn"/>
</dbReference>
<dbReference type="InterPro" id="IPR042545">
    <property type="entry name" value="HEMA"/>
</dbReference>
<dbReference type="InterPro" id="IPR007142">
    <property type="entry name" value="Hemagglutn-estrase_core"/>
</dbReference>
<dbReference type="InterPro" id="IPR003860">
    <property type="entry name" value="Hemagglutn-estrase_hemagglutn"/>
</dbReference>
<dbReference type="Pfam" id="PF03996">
    <property type="entry name" value="Hema_esterase"/>
    <property type="match status" value="1"/>
</dbReference>
<dbReference type="Pfam" id="PF02710">
    <property type="entry name" value="Hema_HEFG"/>
    <property type="match status" value="1"/>
</dbReference>
<dbReference type="SUPFAM" id="SSF52266">
    <property type="entry name" value="SGNH hydrolase"/>
    <property type="match status" value="1"/>
</dbReference>
<dbReference type="SUPFAM" id="SSF49818">
    <property type="entry name" value="Viral protein domain"/>
    <property type="match status" value="1"/>
</dbReference>
<sequence>MFLLPRFCLVCSIISTFGFQNPPTNVVSHFNDDWFLFGDSRTDCNHVVKTNPRNYSYMDLNPALCDSGKISSKAGNSIFRSFHFTDFYNYTGEGQQIIFYEGVNFTPYHAFKCTSVGNNDIWMQNKGLFYTQVYKKMAVYRSLTLVNVPYVYNGSAQPTALCKSGSLILNNPAYIAREANVGDYYYKSEADFSLSGCDEYIVPLCIFNGKFLSNTKYYDDSQYYFNKDTGVIYGLNSTETITTGFDFNCHYLVLPSGNYLAISNELLLTVPTKAICLNKRKVFTPVQVVDSRWNNARQSDNMTAVACQLPYCYFRNSTSNYVGIYDVNHGDAGFTSILSGLLYDSPCFSQQGVFRYDNVSTVWPLFPFGNCPTAASIISSDLPICVYDPLPIILLGILLGVAVIVIVVLLLYFMVDNGIRQHYA</sequence>
<organismHost>
    <name type="scientific">Sus scrofa</name>
    <name type="common">Pig</name>
    <dbReference type="NCBI Taxonomy" id="9823"/>
</organismHost>
<name>HEMA_CVPIA</name>
<reference key="1">
    <citation type="journal article" date="2002" name="J. Gen. Virol.">
        <title>Sequence of the 3'-terminal end (8.1 kb) of the genome of porcine haemagglutinating encephalomyelitis virus: comparison with other haemagglutinating coronaviruses.</title>
        <authorList>
            <person name="Sasseville A.M.-J."/>
            <person name="Boutin M."/>
            <person name="Gelinas A.-M."/>
            <person name="Dea S."/>
        </authorList>
    </citation>
    <scope>NUCLEOTIDE SEQUENCE [GENOMIC RNA]</scope>
</reference>
<comment type="function">
    <text evidence="1">Structural protein that makes short spikes at the surface of the virus. Contains receptor binding and receptor-destroying activities. Mediates de-O-acetylation of N-acetyl-4-O-acetylneuraminic acid, which is probably the receptor determinant recognized by the virus on the surface of erythrocytes and susceptible cells. This receptor-destroying activity is important for virus release as it probably helps preventing self-aggregation and ensures the efficient spread of the progeny virus from cell to cell. May serve as a secondary viral attachment protein for initiating infection, the spike protein being the major one. May become a target for both the humoral and the cellular branches of the immune system.</text>
</comment>
<comment type="catalytic activity">
    <reaction evidence="1">
        <text>N-acetyl-9-O-acetylneuraminate + H2O = N-acetylneuraminate + acetate + H(+)</text>
        <dbReference type="Rhea" id="RHEA:22600"/>
        <dbReference type="ChEBI" id="CHEBI:15377"/>
        <dbReference type="ChEBI" id="CHEBI:15378"/>
        <dbReference type="ChEBI" id="CHEBI:28999"/>
        <dbReference type="ChEBI" id="CHEBI:30089"/>
        <dbReference type="ChEBI" id="CHEBI:35418"/>
        <dbReference type="EC" id="3.1.1.53"/>
    </reaction>
</comment>
<comment type="catalytic activity">
    <reaction evidence="1">
        <text>N-acetyl-4-O-acetylneuraminate + H2O = N-acetylneuraminate + acetate + H(+)</text>
        <dbReference type="Rhea" id="RHEA:25564"/>
        <dbReference type="ChEBI" id="CHEBI:15377"/>
        <dbReference type="ChEBI" id="CHEBI:15378"/>
        <dbReference type="ChEBI" id="CHEBI:29006"/>
        <dbReference type="ChEBI" id="CHEBI:30089"/>
        <dbReference type="ChEBI" id="CHEBI:35418"/>
        <dbReference type="EC" id="3.1.1.53"/>
    </reaction>
</comment>
<comment type="subunit">
    <text evidence="1">Homodimer; disulfide-linked. Forms a complex with the M protein in the pre-Golgi. Associates then with S-M complex to form a ternary complex S-M-HE.</text>
</comment>
<comment type="subcellular location">
    <subcellularLocation>
        <location evidence="1">Virion membrane</location>
        <topology evidence="1">Single-pass type I membrane protein</topology>
    </subcellularLocation>
    <subcellularLocation>
        <location evidence="1">Host cell membrane</location>
        <topology evidence="1">Single-pass type I membrane protein</topology>
    </subcellularLocation>
    <text evidence="1">In infected cells becomes incorporated into the envelope of virions during virus assembly at the endoplasmic reticulum and cis Golgi. However, some may escape incorporation into virions and subsequently migrate to the cell surface.</text>
</comment>
<comment type="PTM">
    <text evidence="1">N-glycosylated in the host RER.</text>
</comment>
<comment type="similarity">
    <text evidence="1">Belongs to the influenza type C/coronaviruses hemagglutinin-esterase family.</text>
</comment>
<accession>Q8JSP9</accession>
<evidence type="ECO:0000255" key="1">
    <source>
        <dbReference type="HAMAP-Rule" id="MF_04207"/>
    </source>
</evidence>
<organism>
    <name type="scientific">Porcine hemagglutinating encephalomyelitis virus (strain IAF-404)</name>
    <name type="common">HEV</name>
    <dbReference type="NCBI Taxonomy" id="230236"/>
    <lineage>
        <taxon>Viruses</taxon>
        <taxon>Riboviria</taxon>
        <taxon>Orthornavirae</taxon>
        <taxon>Pisuviricota</taxon>
        <taxon>Pisoniviricetes</taxon>
        <taxon>Nidovirales</taxon>
        <taxon>Cornidovirineae</taxon>
        <taxon>Coronaviridae</taxon>
        <taxon>Orthocoronavirinae</taxon>
        <taxon>Betacoronavirus</taxon>
        <taxon>Embecovirus</taxon>
        <taxon>Betacoronavirus 1</taxon>
    </lineage>
</organism>
<feature type="signal peptide" evidence="1">
    <location>
        <begin position="1"/>
        <end position="16"/>
    </location>
</feature>
<feature type="chain" id="PRO_0000037150" description="Hemagglutinin-esterase" evidence="1">
    <location>
        <begin position="17"/>
        <end position="424"/>
    </location>
</feature>
<feature type="topological domain" description="Virion surface" evidence="1">
    <location>
        <begin position="17"/>
        <end position="392"/>
    </location>
</feature>
<feature type="transmembrane region" description="Helical" evidence="1">
    <location>
        <begin position="393"/>
        <end position="413"/>
    </location>
</feature>
<feature type="topological domain" description="Intravirion" evidence="1">
    <location>
        <begin position="414"/>
        <end position="424"/>
    </location>
</feature>
<feature type="region of interest" description="Esterase domain 1" evidence="1">
    <location>
        <begin position="7"/>
        <end position="127"/>
    </location>
</feature>
<feature type="region of interest" description="Receptor binding" evidence="1">
    <location>
        <begin position="128"/>
        <end position="266"/>
    </location>
</feature>
<feature type="region of interest" description="Esterase domain 2" evidence="1">
    <location>
        <begin position="267"/>
        <end position="379"/>
    </location>
</feature>
<feature type="active site" description="Nucleophile" evidence="1">
    <location>
        <position position="40"/>
    </location>
</feature>
<feature type="active site" description="Charge relay system" evidence="1">
    <location>
        <position position="326"/>
    </location>
</feature>
<feature type="active site" description="Charge relay system" evidence="1">
    <location>
        <position position="329"/>
    </location>
</feature>
<feature type="glycosylation site" description="N-linked (GlcNAc...) asparagine; by host" evidence="1">
    <location>
        <position position="54"/>
    </location>
</feature>
<feature type="glycosylation site" description="N-linked (GlcNAc...) asparagine; by host" evidence="1">
    <location>
        <position position="89"/>
    </location>
</feature>
<feature type="glycosylation site" description="N-linked (GlcNAc...) asparagine; by host" evidence="1">
    <location>
        <position position="153"/>
    </location>
</feature>
<feature type="glycosylation site" description="N-linked (GlcNAc...) asparagine; by host" evidence="1">
    <location>
        <position position="236"/>
    </location>
</feature>
<feature type="glycosylation site" description="N-linked (GlcNAc...) asparagine; by host" evidence="1">
    <location>
        <position position="301"/>
    </location>
</feature>
<feature type="glycosylation site" description="N-linked (GlcNAc...) asparagine; by host" evidence="1">
    <location>
        <position position="316"/>
    </location>
</feature>
<feature type="glycosylation site" description="N-linked (GlcNAc...) asparagine; by host" evidence="1">
    <location>
        <position position="358"/>
    </location>
</feature>
<feature type="disulfide bond" evidence="1">
    <location>
        <begin position="44"/>
        <end position="65"/>
    </location>
</feature>
<feature type="disulfide bond" evidence="1">
    <location>
        <begin position="113"/>
        <end position="162"/>
    </location>
</feature>
<feature type="disulfide bond" evidence="1">
    <location>
        <begin position="197"/>
        <end position="276"/>
    </location>
</feature>
<feature type="disulfide bond" evidence="1">
    <location>
        <begin position="205"/>
        <end position="249"/>
    </location>
</feature>
<feature type="disulfide bond" evidence="1">
    <location>
        <begin position="307"/>
        <end position="312"/>
    </location>
</feature>
<feature type="disulfide bond" evidence="1">
    <location>
        <begin position="347"/>
        <end position="371"/>
    </location>
</feature>